<comment type="function">
    <text evidence="1">Guanine nucleotide exchange factor (GEF) for RAB14.</text>
</comment>
<comment type="subcellular location">
    <subcellularLocation>
        <location evidence="1">Recycling endosome</location>
    </subcellularLocation>
    <subcellularLocation>
        <location evidence="1">Cytoplasm</location>
    </subcellularLocation>
</comment>
<comment type="similarity">
    <text evidence="4">Belongs to the DENND6 family.</text>
</comment>
<proteinExistence type="evidence at transcript level"/>
<accession>Q5F3L4</accession>
<organism>
    <name type="scientific">Gallus gallus</name>
    <name type="common">Chicken</name>
    <dbReference type="NCBI Taxonomy" id="9031"/>
    <lineage>
        <taxon>Eukaryota</taxon>
        <taxon>Metazoa</taxon>
        <taxon>Chordata</taxon>
        <taxon>Craniata</taxon>
        <taxon>Vertebrata</taxon>
        <taxon>Euteleostomi</taxon>
        <taxon>Archelosauria</taxon>
        <taxon>Archosauria</taxon>
        <taxon>Dinosauria</taxon>
        <taxon>Saurischia</taxon>
        <taxon>Theropoda</taxon>
        <taxon>Coelurosauria</taxon>
        <taxon>Aves</taxon>
        <taxon>Neognathae</taxon>
        <taxon>Galloanserae</taxon>
        <taxon>Galliformes</taxon>
        <taxon>Phasianidae</taxon>
        <taxon>Phasianinae</taxon>
        <taxon>Gallus</taxon>
    </lineage>
</organism>
<dbReference type="EMBL" id="AJ851636">
    <property type="protein sequence ID" value="CAH65270.1"/>
    <property type="molecule type" value="mRNA"/>
</dbReference>
<dbReference type="RefSeq" id="NP_001012799.1">
    <property type="nucleotide sequence ID" value="NM_001012781.1"/>
</dbReference>
<dbReference type="FunCoup" id="Q5F3L4">
    <property type="interactions" value="2372"/>
</dbReference>
<dbReference type="STRING" id="9031.ENSGALP00000045269"/>
<dbReference type="PaxDb" id="9031-ENSGALP00000009062"/>
<dbReference type="GeneID" id="416006"/>
<dbReference type="KEGG" id="gga:416006"/>
<dbReference type="CTD" id="201627"/>
<dbReference type="VEuPathDB" id="HostDB:geneid_416006"/>
<dbReference type="eggNOG" id="KOG2432">
    <property type="taxonomic scope" value="Eukaryota"/>
</dbReference>
<dbReference type="InParanoid" id="Q5F3L4"/>
<dbReference type="OrthoDB" id="10265409at2759"/>
<dbReference type="PhylomeDB" id="Q5F3L4"/>
<dbReference type="PRO" id="PR:Q5F3L4"/>
<dbReference type="Proteomes" id="UP000000539">
    <property type="component" value="Unassembled WGS sequence"/>
</dbReference>
<dbReference type="GO" id="GO:0055037">
    <property type="term" value="C:recycling endosome"/>
    <property type="evidence" value="ECO:0000318"/>
    <property type="project" value="GO_Central"/>
</dbReference>
<dbReference type="GO" id="GO:0005085">
    <property type="term" value="F:guanyl-nucleotide exchange factor activity"/>
    <property type="evidence" value="ECO:0007669"/>
    <property type="project" value="UniProtKB-KW"/>
</dbReference>
<dbReference type="InterPro" id="IPR018307">
    <property type="entry name" value="ABL9/DENND6_dom"/>
</dbReference>
<dbReference type="InterPro" id="IPR024224">
    <property type="entry name" value="DENND6"/>
</dbReference>
<dbReference type="InterPro" id="IPR037516">
    <property type="entry name" value="Tripartite_DENN"/>
</dbReference>
<dbReference type="PANTHER" id="PTHR13677">
    <property type="entry name" value="LD41638P"/>
    <property type="match status" value="1"/>
</dbReference>
<dbReference type="PANTHER" id="PTHR13677:SF1">
    <property type="entry name" value="PROTEIN DENND6A"/>
    <property type="match status" value="1"/>
</dbReference>
<dbReference type="Pfam" id="PF09794">
    <property type="entry name" value="Avl9"/>
    <property type="match status" value="1"/>
</dbReference>
<dbReference type="PROSITE" id="PS50211">
    <property type="entry name" value="DENN"/>
    <property type="match status" value="1"/>
</dbReference>
<sequence length="584" mass="67051">MALWERGAGGAAEAGEDATEEPERGLPLLPWDRFSAWLHCVCVVGFDLELGQAVEVIYPPHSKLTDKEKTNICYLSFPDSNSGCLGDTQFCFRFRRSSGRKASLCCFLDHLDRDLPVYLKKDPAYYYGYVYFRQVRDKSLKRGYFQKSLVLISKLPYIHLFRTVLKQIAPEYFEKSEAFLEAVCSDVDRWPPPVPGEVLHLPIMGVVMKLRIPTYRDKPGTTPVVQNMHQADAQISMTLPTVHEVDLFRCFCPVFFHIQMLWELVLLGEPLVVMAPSPAESSETVLALVSCISPLKYCSDFRPYFTIHDSEFKEYTTRTQAPPSVILGVTNPFFAKTLQHWPHIIRIGDMKLPGDVPKQVKVKKLKNLKTLDSKPGVYTSYKPYLDKDEEIVKQLQKGVQQKRPTEAQSAILRRYFLELTESFIIPLERYVASLMPLQKCISPWKSPPQLRHFSQDDFMKTLEKAGPQLTSGLKGDWIGLYRHFLKSPNFDGWFRSRQKEMTQNLEALHLEALCNENLVFWSQKHTEVETVDLVLKLKNKLLQADREHLPVKTDTLKKLQTHIRDIILALPDDLQDILLKTGTA</sequence>
<name>DEN6A_CHICK</name>
<evidence type="ECO:0000250" key="1"/>
<evidence type="ECO:0000255" key="2">
    <source>
        <dbReference type="PROSITE-ProRule" id="PRU00304"/>
    </source>
</evidence>
<evidence type="ECO:0000256" key="3">
    <source>
        <dbReference type="SAM" id="MobiDB-lite"/>
    </source>
</evidence>
<evidence type="ECO:0000305" key="4"/>
<feature type="chain" id="PRO_0000289118" description="Protein DENND6A">
    <location>
        <begin position="1"/>
        <end position="584"/>
    </location>
</feature>
<feature type="domain" description="uDENN" evidence="2">
    <location>
        <begin position="39"/>
        <end position="218"/>
    </location>
</feature>
<feature type="domain" description="cDENN" evidence="2">
    <location>
        <begin position="244"/>
        <end position="369"/>
    </location>
</feature>
<feature type="domain" description="dDENN" evidence="2">
    <location>
        <begin position="371"/>
        <end position="504"/>
    </location>
</feature>
<feature type="region of interest" description="Disordered" evidence="3">
    <location>
        <begin position="1"/>
        <end position="23"/>
    </location>
</feature>
<protein>
    <recommendedName>
        <fullName>Protein DENND6A</fullName>
    </recommendedName>
    <alternativeName>
        <fullName>DENN domain-containing protein 6A</fullName>
    </alternativeName>
</protein>
<keyword id="KW-0963">Cytoplasm</keyword>
<keyword id="KW-0967">Endosome</keyword>
<keyword id="KW-0344">Guanine-nucleotide releasing factor</keyword>
<keyword id="KW-1185">Reference proteome</keyword>
<reference key="1">
    <citation type="journal article" date="2005" name="Genome Biol.">
        <title>Full-length cDNAs from chicken bursal lymphocytes to facilitate gene function analysis.</title>
        <authorList>
            <person name="Caldwell R.B."/>
            <person name="Kierzek A.M."/>
            <person name="Arakawa H."/>
            <person name="Bezzubov Y."/>
            <person name="Zaim J."/>
            <person name="Fiedler P."/>
            <person name="Kutter S."/>
            <person name="Blagodatski A."/>
            <person name="Kostovska D."/>
            <person name="Koter M."/>
            <person name="Plachy J."/>
            <person name="Carninci P."/>
            <person name="Hayashizaki Y."/>
            <person name="Buerstedde J.-M."/>
        </authorList>
    </citation>
    <scope>NUCLEOTIDE SEQUENCE [LARGE SCALE MRNA]</scope>
    <source>
        <strain>CB</strain>
        <tissue>Bursa of Fabricius</tissue>
    </source>
</reference>
<gene>
    <name type="primary">DENND6A</name>
    <name type="ORF">RCJMB04_14d15</name>
</gene>